<evidence type="ECO:0000250" key="1"/>
<evidence type="ECO:0000255" key="2"/>
<evidence type="ECO:0000305" key="3"/>
<feature type="chain" id="PRO_0000388302" description="UPF0754 membrane protein MAE_37850">
    <location>
        <begin position="1"/>
        <end position="412"/>
    </location>
</feature>
<feature type="transmembrane region" description="Helical" evidence="2">
    <location>
        <begin position="3"/>
        <end position="23"/>
    </location>
</feature>
<feature type="transmembrane region" description="Helical" evidence="2">
    <location>
        <begin position="387"/>
        <end position="407"/>
    </location>
</feature>
<sequence length="412" mass="46851">MNLPTLWTWILPPIAGAIIGYFTNDVAIKMLFRPYKAIYIGKRPLPFTPGLIPRNQDRLAVRVSDTIMGSLLTPEELQKLAKRLLDTERVQGAILWLLQLALKQIKGDRQAKTAEILAAILHDLFGESLARLLKVLARRQDFLEKQINQIFDRLVLEFSLSEQQARQFSDWLLETVLPADVIRLALIDFLTDRNIQVIDEGFREKTSGTYWVVANLFGLRNALARLRTFCLDEKDLANTRIKELLLSLEMRNRLKNWLQSISLQNLPISTVRQLRKTTRDTVRIYIQESGEQFLQDFGQTIDWDQIANLIINRLQSSVSMTTSLGVISQELALILERYLEEDLEKLVAQIIPILNIDQVIRDRVNATSPADLENAIQGIVKQELQGIVNLGGILGLLVGLMQTIILIAQNPG</sequence>
<name>Y3785_MICAN</name>
<keyword id="KW-0997">Cell inner membrane</keyword>
<keyword id="KW-1003">Cell membrane</keyword>
<keyword id="KW-0472">Membrane</keyword>
<keyword id="KW-0812">Transmembrane</keyword>
<keyword id="KW-1133">Transmembrane helix</keyword>
<dbReference type="EMBL" id="AP009552">
    <property type="protein sequence ID" value="BAG03607.1"/>
    <property type="status" value="ALT_INIT"/>
    <property type="molecule type" value="Genomic_DNA"/>
</dbReference>
<dbReference type="STRING" id="449447.MAE_37850"/>
<dbReference type="PaxDb" id="449447-MAE_37850"/>
<dbReference type="EnsemblBacteria" id="BAG03607">
    <property type="protein sequence ID" value="BAG03607"/>
    <property type="gene ID" value="MAE_37850"/>
</dbReference>
<dbReference type="KEGG" id="mar:MAE_37850"/>
<dbReference type="PATRIC" id="fig|449447.4.peg.3426"/>
<dbReference type="eggNOG" id="COG4399">
    <property type="taxonomic scope" value="Bacteria"/>
</dbReference>
<dbReference type="HOGENOM" id="CLU_042384_0_0_3"/>
<dbReference type="BioCyc" id="MAER449447:MAE_RS16365-MONOMER"/>
<dbReference type="Proteomes" id="UP000001510">
    <property type="component" value="Chromosome"/>
</dbReference>
<dbReference type="GO" id="GO:0005886">
    <property type="term" value="C:plasma membrane"/>
    <property type="evidence" value="ECO:0007669"/>
    <property type="project" value="UniProtKB-SubCell"/>
</dbReference>
<dbReference type="InterPro" id="IPR007383">
    <property type="entry name" value="DUF445"/>
</dbReference>
<dbReference type="InterPro" id="IPR016991">
    <property type="entry name" value="UCP032178"/>
</dbReference>
<dbReference type="PANTHER" id="PTHR35791">
    <property type="entry name" value="UPF0754 MEMBRANE PROTEIN YHEB"/>
    <property type="match status" value="1"/>
</dbReference>
<dbReference type="PANTHER" id="PTHR35791:SF1">
    <property type="entry name" value="UPF0754 MEMBRANE PROTEIN YHEB"/>
    <property type="match status" value="1"/>
</dbReference>
<dbReference type="Pfam" id="PF04286">
    <property type="entry name" value="DUF445"/>
    <property type="match status" value="1"/>
</dbReference>
<dbReference type="PIRSF" id="PIRSF032178">
    <property type="entry name" value="UCP032178"/>
    <property type="match status" value="1"/>
</dbReference>
<organism>
    <name type="scientific">Microcystis aeruginosa (strain NIES-843 / IAM M-2473)</name>
    <dbReference type="NCBI Taxonomy" id="449447"/>
    <lineage>
        <taxon>Bacteria</taxon>
        <taxon>Bacillati</taxon>
        <taxon>Cyanobacteriota</taxon>
        <taxon>Cyanophyceae</taxon>
        <taxon>Oscillatoriophycideae</taxon>
        <taxon>Chroococcales</taxon>
        <taxon>Microcystaceae</taxon>
        <taxon>Microcystis</taxon>
    </lineage>
</organism>
<gene>
    <name type="ordered locus">MAE_37850</name>
</gene>
<proteinExistence type="inferred from homology"/>
<reference key="1">
    <citation type="journal article" date="2007" name="DNA Res.">
        <title>Complete genomic structure of the bloom-forming toxic cyanobacterium Microcystis aeruginosa NIES-843.</title>
        <authorList>
            <person name="Kaneko T."/>
            <person name="Nakajima N."/>
            <person name="Okamoto S."/>
            <person name="Suzuki I."/>
            <person name="Tanabe Y."/>
            <person name="Tamaoki M."/>
            <person name="Nakamura Y."/>
            <person name="Kasai F."/>
            <person name="Watanabe A."/>
            <person name="Kawashima K."/>
            <person name="Kishida Y."/>
            <person name="Ono A."/>
            <person name="Shimizu Y."/>
            <person name="Takahashi C."/>
            <person name="Minami C."/>
            <person name="Fujishiro T."/>
            <person name="Kohara M."/>
            <person name="Katoh M."/>
            <person name="Nakazaki N."/>
            <person name="Nakayama S."/>
            <person name="Yamada M."/>
            <person name="Tabata S."/>
            <person name="Watanabe M.M."/>
        </authorList>
    </citation>
    <scope>NUCLEOTIDE SEQUENCE [LARGE SCALE GENOMIC DNA]</scope>
    <source>
        <strain>NIES-843 / IAM M-247</strain>
    </source>
</reference>
<accession>B0JPN3</accession>
<comment type="subcellular location">
    <subcellularLocation>
        <location evidence="1">Cell inner membrane</location>
        <topology evidence="1">Multi-pass membrane protein</topology>
    </subcellularLocation>
</comment>
<comment type="similarity">
    <text evidence="3">Belongs to the UPF0754 family.</text>
</comment>
<comment type="sequence caution" evidence="3">
    <conflict type="erroneous initiation">
        <sequence resource="EMBL-CDS" id="BAG03607"/>
    </conflict>
</comment>
<protein>
    <recommendedName>
        <fullName>UPF0754 membrane protein MAE_37850</fullName>
    </recommendedName>
</protein>